<comment type="function">
    <text evidence="1">Catalyzes the condensation of carbamoyl phosphate and aspartate to form carbamoyl aspartate and inorganic phosphate, the committed step in the de novo pyrimidine nucleotide biosynthesis pathway.</text>
</comment>
<comment type="catalytic activity">
    <reaction evidence="1">
        <text>carbamoyl phosphate + L-aspartate = N-carbamoyl-L-aspartate + phosphate + H(+)</text>
        <dbReference type="Rhea" id="RHEA:20013"/>
        <dbReference type="ChEBI" id="CHEBI:15378"/>
        <dbReference type="ChEBI" id="CHEBI:29991"/>
        <dbReference type="ChEBI" id="CHEBI:32814"/>
        <dbReference type="ChEBI" id="CHEBI:43474"/>
        <dbReference type="ChEBI" id="CHEBI:58228"/>
        <dbReference type="EC" id="2.1.3.2"/>
    </reaction>
</comment>
<comment type="pathway">
    <text evidence="1">Pyrimidine metabolism; UMP biosynthesis via de novo pathway; (S)-dihydroorotate from bicarbonate: step 2/3.</text>
</comment>
<comment type="subunit">
    <text evidence="1">Heterododecamer (2C3:3R2) of six catalytic PyrB chains organized as two trimers (C3), and six regulatory PyrI chains organized as three dimers (R2).</text>
</comment>
<comment type="similarity">
    <text evidence="1">Belongs to the aspartate/ornithine carbamoyltransferase superfamily. ATCase family.</text>
</comment>
<evidence type="ECO:0000255" key="1">
    <source>
        <dbReference type="HAMAP-Rule" id="MF_00001"/>
    </source>
</evidence>
<keyword id="KW-0665">Pyrimidine biosynthesis</keyword>
<keyword id="KW-0808">Transferase</keyword>
<accession>A9IU46</accession>
<gene>
    <name evidence="1" type="primary">pyrB</name>
    <name type="ordered locus">BT_1139</name>
</gene>
<name>PYRB_BART1</name>
<dbReference type="EC" id="2.1.3.2" evidence="1"/>
<dbReference type="EMBL" id="AM260525">
    <property type="protein sequence ID" value="CAK01511.1"/>
    <property type="molecule type" value="Genomic_DNA"/>
</dbReference>
<dbReference type="RefSeq" id="WP_012231714.1">
    <property type="nucleotide sequence ID" value="NC_010161.1"/>
</dbReference>
<dbReference type="SMR" id="A9IU46"/>
<dbReference type="KEGG" id="btr:BT_1139"/>
<dbReference type="eggNOG" id="COG0540">
    <property type="taxonomic scope" value="Bacteria"/>
</dbReference>
<dbReference type="HOGENOM" id="CLU_043846_2_0_5"/>
<dbReference type="UniPathway" id="UPA00070">
    <property type="reaction ID" value="UER00116"/>
</dbReference>
<dbReference type="Proteomes" id="UP000001592">
    <property type="component" value="Chromosome"/>
</dbReference>
<dbReference type="GO" id="GO:0005829">
    <property type="term" value="C:cytosol"/>
    <property type="evidence" value="ECO:0007669"/>
    <property type="project" value="TreeGrafter"/>
</dbReference>
<dbReference type="GO" id="GO:0016597">
    <property type="term" value="F:amino acid binding"/>
    <property type="evidence" value="ECO:0007669"/>
    <property type="project" value="InterPro"/>
</dbReference>
<dbReference type="GO" id="GO:0004070">
    <property type="term" value="F:aspartate carbamoyltransferase activity"/>
    <property type="evidence" value="ECO:0007669"/>
    <property type="project" value="UniProtKB-UniRule"/>
</dbReference>
<dbReference type="GO" id="GO:0006207">
    <property type="term" value="P:'de novo' pyrimidine nucleobase biosynthetic process"/>
    <property type="evidence" value="ECO:0007669"/>
    <property type="project" value="InterPro"/>
</dbReference>
<dbReference type="GO" id="GO:0044205">
    <property type="term" value="P:'de novo' UMP biosynthetic process"/>
    <property type="evidence" value="ECO:0007669"/>
    <property type="project" value="UniProtKB-UniRule"/>
</dbReference>
<dbReference type="GO" id="GO:0006520">
    <property type="term" value="P:amino acid metabolic process"/>
    <property type="evidence" value="ECO:0007669"/>
    <property type="project" value="InterPro"/>
</dbReference>
<dbReference type="FunFam" id="3.40.50.1370:FF:000007">
    <property type="entry name" value="Aspartate carbamoyltransferase"/>
    <property type="match status" value="1"/>
</dbReference>
<dbReference type="Gene3D" id="3.40.50.1370">
    <property type="entry name" value="Aspartate/ornithine carbamoyltransferase"/>
    <property type="match status" value="2"/>
</dbReference>
<dbReference type="HAMAP" id="MF_00001">
    <property type="entry name" value="Asp_carb_tr"/>
    <property type="match status" value="1"/>
</dbReference>
<dbReference type="InterPro" id="IPR006132">
    <property type="entry name" value="Asp/Orn_carbamoyltranf_P-bd"/>
</dbReference>
<dbReference type="InterPro" id="IPR006130">
    <property type="entry name" value="Asp/Orn_carbamoylTrfase"/>
</dbReference>
<dbReference type="InterPro" id="IPR036901">
    <property type="entry name" value="Asp/Orn_carbamoylTrfase_sf"/>
</dbReference>
<dbReference type="InterPro" id="IPR002082">
    <property type="entry name" value="Asp_carbamoyltransf"/>
</dbReference>
<dbReference type="InterPro" id="IPR006131">
    <property type="entry name" value="Asp_carbamoyltransf_Asp/Orn-bd"/>
</dbReference>
<dbReference type="NCBIfam" id="TIGR00670">
    <property type="entry name" value="asp_carb_tr"/>
    <property type="match status" value="1"/>
</dbReference>
<dbReference type="NCBIfam" id="NF002032">
    <property type="entry name" value="PRK00856.1"/>
    <property type="match status" value="1"/>
</dbReference>
<dbReference type="PANTHER" id="PTHR45753:SF6">
    <property type="entry name" value="ASPARTATE CARBAMOYLTRANSFERASE"/>
    <property type="match status" value="1"/>
</dbReference>
<dbReference type="PANTHER" id="PTHR45753">
    <property type="entry name" value="ORNITHINE CARBAMOYLTRANSFERASE, MITOCHONDRIAL"/>
    <property type="match status" value="1"/>
</dbReference>
<dbReference type="Pfam" id="PF00185">
    <property type="entry name" value="OTCace"/>
    <property type="match status" value="1"/>
</dbReference>
<dbReference type="Pfam" id="PF02729">
    <property type="entry name" value="OTCace_N"/>
    <property type="match status" value="1"/>
</dbReference>
<dbReference type="PRINTS" id="PR00100">
    <property type="entry name" value="AOTCASE"/>
</dbReference>
<dbReference type="PRINTS" id="PR00101">
    <property type="entry name" value="ATCASE"/>
</dbReference>
<dbReference type="SUPFAM" id="SSF53671">
    <property type="entry name" value="Aspartate/ornithine carbamoyltransferase"/>
    <property type="match status" value="1"/>
</dbReference>
<dbReference type="PROSITE" id="PS00097">
    <property type="entry name" value="CARBAMOYLTRANSFERASE"/>
    <property type="match status" value="1"/>
</dbReference>
<protein>
    <recommendedName>
        <fullName evidence="1">Aspartate carbamoyltransferase catalytic subunit</fullName>
        <ecNumber evidence="1">2.1.3.2</ecNumber>
    </recommendedName>
    <alternativeName>
        <fullName evidence="1">Aspartate transcarbamylase</fullName>
        <shortName evidence="1">ATCase</shortName>
    </alternativeName>
</protein>
<organism>
    <name type="scientific">Bartonella tribocorum (strain CIP 105476 / IBS 506)</name>
    <dbReference type="NCBI Taxonomy" id="382640"/>
    <lineage>
        <taxon>Bacteria</taxon>
        <taxon>Pseudomonadati</taxon>
        <taxon>Pseudomonadota</taxon>
        <taxon>Alphaproteobacteria</taxon>
        <taxon>Hyphomicrobiales</taxon>
        <taxon>Bartonellaceae</taxon>
        <taxon>Bartonella</taxon>
    </lineage>
</organism>
<proteinExistence type="inferred from homology"/>
<reference key="1">
    <citation type="journal article" date="2007" name="Nat. Genet.">
        <title>Genomic analysis of Bartonella identifies type IV secretion systems as host adaptability factors.</title>
        <authorList>
            <person name="Saenz H.L."/>
            <person name="Engel P."/>
            <person name="Stoeckli M.C."/>
            <person name="Lanz C."/>
            <person name="Raddatz G."/>
            <person name="Vayssier-Taussat M."/>
            <person name="Birtles R."/>
            <person name="Schuster S.C."/>
            <person name="Dehio C."/>
        </authorList>
    </citation>
    <scope>NUCLEOTIDE SEQUENCE [LARGE SCALE GENOMIC DNA]</scope>
    <source>
        <strain>CIP 105476 / IBS 506</strain>
    </source>
</reference>
<feature type="chain" id="PRO_1000073720" description="Aspartate carbamoyltransferase catalytic subunit">
    <location>
        <begin position="1"/>
        <end position="321"/>
    </location>
</feature>
<feature type="binding site" evidence="1">
    <location>
        <position position="65"/>
    </location>
    <ligand>
        <name>carbamoyl phosphate</name>
        <dbReference type="ChEBI" id="CHEBI:58228"/>
    </ligand>
</feature>
<feature type="binding site" evidence="1">
    <location>
        <position position="66"/>
    </location>
    <ligand>
        <name>carbamoyl phosphate</name>
        <dbReference type="ChEBI" id="CHEBI:58228"/>
    </ligand>
</feature>
<feature type="binding site" evidence="1">
    <location>
        <position position="93"/>
    </location>
    <ligand>
        <name>L-aspartate</name>
        <dbReference type="ChEBI" id="CHEBI:29991"/>
    </ligand>
</feature>
<feature type="binding site" evidence="1">
    <location>
        <position position="115"/>
    </location>
    <ligand>
        <name>carbamoyl phosphate</name>
        <dbReference type="ChEBI" id="CHEBI:58228"/>
    </ligand>
</feature>
<feature type="binding site" evidence="1">
    <location>
        <position position="143"/>
    </location>
    <ligand>
        <name>carbamoyl phosphate</name>
        <dbReference type="ChEBI" id="CHEBI:58228"/>
    </ligand>
</feature>
<feature type="binding site" evidence="1">
    <location>
        <position position="146"/>
    </location>
    <ligand>
        <name>carbamoyl phosphate</name>
        <dbReference type="ChEBI" id="CHEBI:58228"/>
    </ligand>
</feature>
<feature type="binding site" evidence="1">
    <location>
        <position position="176"/>
    </location>
    <ligand>
        <name>L-aspartate</name>
        <dbReference type="ChEBI" id="CHEBI:29991"/>
    </ligand>
</feature>
<feature type="binding site" evidence="1">
    <location>
        <position position="230"/>
    </location>
    <ligand>
        <name>L-aspartate</name>
        <dbReference type="ChEBI" id="CHEBI:29991"/>
    </ligand>
</feature>
<feature type="binding site" evidence="1">
    <location>
        <position position="271"/>
    </location>
    <ligand>
        <name>carbamoyl phosphate</name>
        <dbReference type="ChEBI" id="CHEBI:58228"/>
    </ligand>
</feature>
<feature type="binding site" evidence="1">
    <location>
        <position position="272"/>
    </location>
    <ligand>
        <name>carbamoyl phosphate</name>
        <dbReference type="ChEBI" id="CHEBI:58228"/>
    </ligand>
</feature>
<sequence length="321" mass="35148">MIQDNFFPLFPHKHLLAIKDLSVQDLNTLLDRAEANVILSNKIDKTKSILRGRTQINLFFEASTRTQSSFELAGKRLGADVISVAIGNSSVKKGETLFDTAATLNAMKPDILVFRHSSAGAAALLAQKVDCCVINAGDGAHEHPTQALLDALTIKRAKGRIEGLTVAICGDILHSRVARSNILSLNALGARVRAVAPSTLLPTEINHMSVEVFNTMKDGLKDADVIMMLRLQHERMTGSFIPSTREYFHYFGLHKENLTYAKNNCIILHPGPINRGVEIASDIADGPQSMIRTQVEMGIAVRMAVMEALLDSRLKINGEKK</sequence>